<evidence type="ECO:0000255" key="1">
    <source>
        <dbReference type="HAMAP-Rule" id="MF_01326"/>
    </source>
</evidence>
<evidence type="ECO:0000305" key="2"/>
<accession>Q1H4M6</accession>
<reference key="1">
    <citation type="submission" date="2006-03" db="EMBL/GenBank/DDBJ databases">
        <title>Complete sequence of Methylobacillus flagellatus KT.</title>
        <authorList>
            <consortium name="US DOE Joint Genome Institute"/>
            <person name="Copeland A."/>
            <person name="Lucas S."/>
            <person name="Lapidus A."/>
            <person name="Barry K."/>
            <person name="Detter J.C."/>
            <person name="Glavina del Rio T."/>
            <person name="Hammon N."/>
            <person name="Israni S."/>
            <person name="Dalin E."/>
            <person name="Tice H."/>
            <person name="Pitluck S."/>
            <person name="Brettin T."/>
            <person name="Bruce D."/>
            <person name="Han C."/>
            <person name="Tapia R."/>
            <person name="Saunders E."/>
            <person name="Gilna P."/>
            <person name="Schmutz J."/>
            <person name="Larimer F."/>
            <person name="Land M."/>
            <person name="Kyrpides N."/>
            <person name="Anderson I."/>
            <person name="Richardson P."/>
        </authorList>
    </citation>
    <scope>NUCLEOTIDE SEQUENCE [LARGE SCALE GENOMIC DNA]</scope>
    <source>
        <strain>ATCC 51484 / DSM 6875 / VKM B-1610 / KT</strain>
    </source>
</reference>
<gene>
    <name evidence="1" type="primary">rplX</name>
    <name type="ordered locus">Mfla_0290</name>
</gene>
<organism>
    <name type="scientific">Methylobacillus flagellatus (strain ATCC 51484 / DSM 6875 / VKM B-1610 / KT)</name>
    <dbReference type="NCBI Taxonomy" id="265072"/>
    <lineage>
        <taxon>Bacteria</taxon>
        <taxon>Pseudomonadati</taxon>
        <taxon>Pseudomonadota</taxon>
        <taxon>Betaproteobacteria</taxon>
        <taxon>Nitrosomonadales</taxon>
        <taxon>Methylophilaceae</taxon>
        <taxon>Methylobacillus</taxon>
    </lineage>
</organism>
<dbReference type="EMBL" id="CP000284">
    <property type="protein sequence ID" value="ABE48561.1"/>
    <property type="molecule type" value="Genomic_DNA"/>
</dbReference>
<dbReference type="RefSeq" id="WP_011478658.1">
    <property type="nucleotide sequence ID" value="NC_007947.1"/>
</dbReference>
<dbReference type="SMR" id="Q1H4M6"/>
<dbReference type="STRING" id="265072.Mfla_0290"/>
<dbReference type="KEGG" id="mfa:Mfla_0290"/>
<dbReference type="eggNOG" id="COG0198">
    <property type="taxonomic scope" value="Bacteria"/>
</dbReference>
<dbReference type="HOGENOM" id="CLU_093315_2_2_4"/>
<dbReference type="OrthoDB" id="9807419at2"/>
<dbReference type="Proteomes" id="UP000002440">
    <property type="component" value="Chromosome"/>
</dbReference>
<dbReference type="GO" id="GO:1990904">
    <property type="term" value="C:ribonucleoprotein complex"/>
    <property type="evidence" value="ECO:0007669"/>
    <property type="project" value="UniProtKB-KW"/>
</dbReference>
<dbReference type="GO" id="GO:0005840">
    <property type="term" value="C:ribosome"/>
    <property type="evidence" value="ECO:0007669"/>
    <property type="project" value="UniProtKB-KW"/>
</dbReference>
<dbReference type="GO" id="GO:0019843">
    <property type="term" value="F:rRNA binding"/>
    <property type="evidence" value="ECO:0007669"/>
    <property type="project" value="UniProtKB-UniRule"/>
</dbReference>
<dbReference type="GO" id="GO:0003735">
    <property type="term" value="F:structural constituent of ribosome"/>
    <property type="evidence" value="ECO:0007669"/>
    <property type="project" value="InterPro"/>
</dbReference>
<dbReference type="GO" id="GO:0006412">
    <property type="term" value="P:translation"/>
    <property type="evidence" value="ECO:0007669"/>
    <property type="project" value="UniProtKB-UniRule"/>
</dbReference>
<dbReference type="CDD" id="cd06089">
    <property type="entry name" value="KOW_RPL26"/>
    <property type="match status" value="1"/>
</dbReference>
<dbReference type="FunFam" id="2.30.30.30:FF:000004">
    <property type="entry name" value="50S ribosomal protein L24"/>
    <property type="match status" value="1"/>
</dbReference>
<dbReference type="Gene3D" id="2.30.30.30">
    <property type="match status" value="1"/>
</dbReference>
<dbReference type="HAMAP" id="MF_01326_B">
    <property type="entry name" value="Ribosomal_uL24_B"/>
    <property type="match status" value="1"/>
</dbReference>
<dbReference type="InterPro" id="IPR005824">
    <property type="entry name" value="KOW"/>
</dbReference>
<dbReference type="InterPro" id="IPR014722">
    <property type="entry name" value="Rib_uL2_dom2"/>
</dbReference>
<dbReference type="InterPro" id="IPR003256">
    <property type="entry name" value="Ribosomal_uL24"/>
</dbReference>
<dbReference type="InterPro" id="IPR041988">
    <property type="entry name" value="Ribosomal_uL24_KOW"/>
</dbReference>
<dbReference type="InterPro" id="IPR008991">
    <property type="entry name" value="Translation_prot_SH3-like_sf"/>
</dbReference>
<dbReference type="NCBIfam" id="TIGR01079">
    <property type="entry name" value="rplX_bact"/>
    <property type="match status" value="1"/>
</dbReference>
<dbReference type="PANTHER" id="PTHR12903">
    <property type="entry name" value="MITOCHONDRIAL RIBOSOMAL PROTEIN L24"/>
    <property type="match status" value="1"/>
</dbReference>
<dbReference type="Pfam" id="PF00467">
    <property type="entry name" value="KOW"/>
    <property type="match status" value="1"/>
</dbReference>
<dbReference type="Pfam" id="PF17136">
    <property type="entry name" value="ribosomal_L24"/>
    <property type="match status" value="1"/>
</dbReference>
<dbReference type="SMART" id="SM00739">
    <property type="entry name" value="KOW"/>
    <property type="match status" value="1"/>
</dbReference>
<dbReference type="SUPFAM" id="SSF50104">
    <property type="entry name" value="Translation proteins SH3-like domain"/>
    <property type="match status" value="1"/>
</dbReference>
<name>RL24_METFK</name>
<feature type="chain" id="PRO_1000052249" description="Large ribosomal subunit protein uL24">
    <location>
        <begin position="1"/>
        <end position="105"/>
    </location>
</feature>
<protein>
    <recommendedName>
        <fullName evidence="1">Large ribosomal subunit protein uL24</fullName>
    </recommendedName>
    <alternativeName>
        <fullName evidence="2">50S ribosomal protein L24</fullName>
    </alternativeName>
</protein>
<keyword id="KW-1185">Reference proteome</keyword>
<keyword id="KW-0687">Ribonucleoprotein</keyword>
<keyword id="KW-0689">Ribosomal protein</keyword>
<keyword id="KW-0694">RNA-binding</keyword>
<keyword id="KW-0699">rRNA-binding</keyword>
<sequence length="105" mass="11340">MSKIRKGDEVILNTGKDKGKRGTVLRVLPTGQVLVEGINVVKKHAKPNPMRGIAGGIISKEMPVDISNVALFNRATQKGDRVGFKTLDDGRKVRVFKSSGEVVDA</sequence>
<comment type="function">
    <text evidence="1">One of two assembly initiator proteins, it binds directly to the 5'-end of the 23S rRNA, where it nucleates assembly of the 50S subunit.</text>
</comment>
<comment type="function">
    <text evidence="1">One of the proteins that surrounds the polypeptide exit tunnel on the outside of the subunit.</text>
</comment>
<comment type="subunit">
    <text evidence="1">Part of the 50S ribosomal subunit.</text>
</comment>
<comment type="similarity">
    <text evidence="1">Belongs to the universal ribosomal protein uL24 family.</text>
</comment>
<proteinExistence type="inferred from homology"/>